<dbReference type="EMBL" id="Z71680">
    <property type="protein sequence ID" value="CAA96347.1"/>
    <property type="molecule type" value="Genomic_DNA"/>
</dbReference>
<dbReference type="EMBL" id="BK006947">
    <property type="protein sequence ID" value="DAA10606.1"/>
    <property type="molecule type" value="Genomic_DNA"/>
</dbReference>
<dbReference type="PIR" id="S63397">
    <property type="entry name" value="S63397"/>
</dbReference>
<dbReference type="RefSeq" id="NP_014463.1">
    <property type="nucleotide sequence ID" value="NM_001183242.1"/>
</dbReference>
<dbReference type="SMR" id="P53751"/>
<dbReference type="BioGRID" id="35891">
    <property type="interactions" value="36"/>
</dbReference>
<dbReference type="DIP" id="DIP-4251N"/>
<dbReference type="FunCoup" id="P53751">
    <property type="interactions" value="78"/>
</dbReference>
<dbReference type="IntAct" id="P53751">
    <property type="interactions" value="7"/>
</dbReference>
<dbReference type="MINT" id="P53751"/>
<dbReference type="STRING" id="4932.YNR065C"/>
<dbReference type="GlyGen" id="P53751">
    <property type="glycosylation" value="5 sites"/>
</dbReference>
<dbReference type="iPTMnet" id="P53751"/>
<dbReference type="PaxDb" id="4932-YNR065C"/>
<dbReference type="PeptideAtlas" id="P53751"/>
<dbReference type="EnsemblFungi" id="YNR065C_mRNA">
    <property type="protein sequence ID" value="YNR065C"/>
    <property type="gene ID" value="YNR065C"/>
</dbReference>
<dbReference type="GeneID" id="855802"/>
<dbReference type="KEGG" id="sce:YNR065C"/>
<dbReference type="AGR" id="SGD:S000005348"/>
<dbReference type="SGD" id="S000005348">
    <property type="gene designation" value="YNR065C"/>
</dbReference>
<dbReference type="VEuPathDB" id="FungiDB:YNR065C"/>
<dbReference type="eggNOG" id="KOG3511">
    <property type="taxonomic scope" value="Eukaryota"/>
</dbReference>
<dbReference type="GeneTree" id="ENSGT01030000234563"/>
<dbReference type="HOGENOM" id="CLU_000700_0_1_1"/>
<dbReference type="InParanoid" id="P53751"/>
<dbReference type="OMA" id="GNIFSTH"/>
<dbReference type="OrthoDB" id="443634at2759"/>
<dbReference type="BioCyc" id="YEAST:G3O-33369-MONOMER"/>
<dbReference type="BioGRID-ORCS" id="855802">
    <property type="hits" value="0 hits in 10 CRISPR screens"/>
</dbReference>
<dbReference type="PRO" id="PR:P53751"/>
<dbReference type="Proteomes" id="UP000002311">
    <property type="component" value="Chromosome XIV"/>
</dbReference>
<dbReference type="RNAct" id="P53751">
    <property type="molecule type" value="protein"/>
</dbReference>
<dbReference type="GO" id="GO:0005829">
    <property type="term" value="C:cytosol"/>
    <property type="evidence" value="ECO:0007669"/>
    <property type="project" value="GOC"/>
</dbReference>
<dbReference type="GO" id="GO:0005783">
    <property type="term" value="C:endoplasmic reticulum"/>
    <property type="evidence" value="ECO:0007005"/>
    <property type="project" value="SGD"/>
</dbReference>
<dbReference type="GO" id="GO:0005794">
    <property type="term" value="C:Golgi apparatus"/>
    <property type="evidence" value="ECO:0000318"/>
    <property type="project" value="GO_Central"/>
</dbReference>
<dbReference type="GO" id="GO:0016020">
    <property type="term" value="C:membrane"/>
    <property type="evidence" value="ECO:0000318"/>
    <property type="project" value="GO_Central"/>
</dbReference>
<dbReference type="GO" id="GO:0006895">
    <property type="term" value="P:Golgi to endosome transport"/>
    <property type="evidence" value="ECO:0000318"/>
    <property type="project" value="GO_Central"/>
</dbReference>
<dbReference type="GO" id="GO:0006896">
    <property type="term" value="P:Golgi to vacuole transport"/>
    <property type="evidence" value="ECO:0000318"/>
    <property type="project" value="GO_Central"/>
</dbReference>
<dbReference type="GO" id="GO:0006623">
    <property type="term" value="P:protein targeting to vacuole"/>
    <property type="evidence" value="ECO:0000318"/>
    <property type="project" value="GO_Central"/>
</dbReference>
<dbReference type="CDD" id="cd15482">
    <property type="entry name" value="Sialidase_non-viral"/>
    <property type="match status" value="1"/>
</dbReference>
<dbReference type="FunFam" id="3.30.60.270:FF:000005">
    <property type="entry name" value="Sortilin"/>
    <property type="match status" value="1"/>
</dbReference>
<dbReference type="FunFam" id="3.30.60.270:FF:000008">
    <property type="entry name" value="Vacuolar protein sorting/targeting protein PEP1"/>
    <property type="match status" value="1"/>
</dbReference>
<dbReference type="FunFam" id="2.130.10.10:FF:000998">
    <property type="entry name" value="VPS10 homolog 2"/>
    <property type="match status" value="1"/>
</dbReference>
<dbReference type="Gene3D" id="2.10.70.80">
    <property type="match status" value="1"/>
</dbReference>
<dbReference type="Gene3D" id="3.30.60.270">
    <property type="match status" value="2"/>
</dbReference>
<dbReference type="Gene3D" id="2.130.10.10">
    <property type="entry name" value="YVTN repeat-like/Quinoprotein amine dehydrogenase"/>
    <property type="match status" value="2"/>
</dbReference>
<dbReference type="InterPro" id="IPR031777">
    <property type="entry name" value="Sortilin_C"/>
</dbReference>
<dbReference type="InterPro" id="IPR031778">
    <property type="entry name" value="Sortilin_N"/>
</dbReference>
<dbReference type="InterPro" id="IPR006581">
    <property type="entry name" value="VPS10"/>
</dbReference>
<dbReference type="InterPro" id="IPR050310">
    <property type="entry name" value="VPS10-sortilin"/>
</dbReference>
<dbReference type="InterPro" id="IPR015943">
    <property type="entry name" value="WD40/YVTN_repeat-like_dom_sf"/>
</dbReference>
<dbReference type="PANTHER" id="PTHR12106">
    <property type="entry name" value="SORTILIN RELATED"/>
    <property type="match status" value="1"/>
</dbReference>
<dbReference type="PANTHER" id="PTHR12106:SF27">
    <property type="entry name" value="SORTILIN-RELATED RECEPTOR"/>
    <property type="match status" value="1"/>
</dbReference>
<dbReference type="Pfam" id="PF15902">
    <property type="entry name" value="Sortilin-Vps10"/>
    <property type="match status" value="2"/>
</dbReference>
<dbReference type="Pfam" id="PF15901">
    <property type="entry name" value="Sortilin_C"/>
    <property type="match status" value="2"/>
</dbReference>
<dbReference type="SMART" id="SM00602">
    <property type="entry name" value="VPS10"/>
    <property type="match status" value="1"/>
</dbReference>
<dbReference type="SUPFAM" id="SSF110296">
    <property type="entry name" value="Oligoxyloglucan reducing end-specific cellobiohydrolase"/>
    <property type="match status" value="2"/>
</dbReference>
<proteinExistence type="predicted"/>
<reference key="1">
    <citation type="journal article" date="1997" name="Nature">
        <title>The nucleotide sequence of Saccharomyces cerevisiae chromosome XIV and its evolutionary implications.</title>
        <authorList>
            <person name="Philippsen P."/>
            <person name="Kleine K."/>
            <person name="Poehlmann R."/>
            <person name="Duesterhoeft A."/>
            <person name="Hamberg K."/>
            <person name="Hegemann J.H."/>
            <person name="Obermaier B."/>
            <person name="Urrestarazu L.A."/>
            <person name="Aert R."/>
            <person name="Albermann K."/>
            <person name="Altmann R."/>
            <person name="Andre B."/>
            <person name="Baladron V."/>
            <person name="Ballesta J.P.G."/>
            <person name="Becam A.-M."/>
            <person name="Beinhauer J.D."/>
            <person name="Boskovic J."/>
            <person name="Buitrago M.J."/>
            <person name="Bussereau F."/>
            <person name="Coster F."/>
            <person name="Crouzet M."/>
            <person name="D'Angelo M."/>
            <person name="Dal Pero F."/>
            <person name="De Antoni A."/>
            <person name="del Rey F."/>
            <person name="Doignon F."/>
            <person name="Domdey H."/>
            <person name="Dubois E."/>
            <person name="Fiedler T.A."/>
            <person name="Fleig U."/>
            <person name="Floeth M."/>
            <person name="Fritz C."/>
            <person name="Gaillardin C."/>
            <person name="Garcia-Cantalejo J.M."/>
            <person name="Glansdorff N."/>
            <person name="Goffeau A."/>
            <person name="Gueldener U."/>
            <person name="Herbert C.J."/>
            <person name="Heumann K."/>
            <person name="Heuss-Neitzel D."/>
            <person name="Hilbert H."/>
            <person name="Hinni K."/>
            <person name="Iraqui Houssaini I."/>
            <person name="Jacquet M."/>
            <person name="Jimenez A."/>
            <person name="Jonniaux J.-L."/>
            <person name="Karpfinger-Hartl L."/>
            <person name="Lanfranchi G."/>
            <person name="Lepingle A."/>
            <person name="Levesque H."/>
            <person name="Lyck R."/>
            <person name="Maftahi M."/>
            <person name="Mallet L."/>
            <person name="Maurer C.T.C."/>
            <person name="Messenguy F."/>
            <person name="Mewes H.-W."/>
            <person name="Moestl D."/>
            <person name="Nasr F."/>
            <person name="Nicaud J.-M."/>
            <person name="Niedenthal R.K."/>
            <person name="Pandolfo D."/>
            <person name="Pierard A."/>
            <person name="Piravandi E."/>
            <person name="Planta R.J."/>
            <person name="Pohl T.M."/>
            <person name="Purnelle B."/>
            <person name="Rebischung C."/>
            <person name="Remacha M.A."/>
            <person name="Revuelta J.L."/>
            <person name="Rinke M."/>
            <person name="Saiz J.E."/>
            <person name="Sartorello F."/>
            <person name="Scherens B."/>
            <person name="Sen-Gupta M."/>
            <person name="Soler-Mira A."/>
            <person name="Urbanus J.H.M."/>
            <person name="Valle G."/>
            <person name="Van Dyck L."/>
            <person name="Verhasselt P."/>
            <person name="Vierendeels F."/>
            <person name="Vissers S."/>
            <person name="Voet M."/>
            <person name="Volckaert G."/>
            <person name="Wach A."/>
            <person name="Wambutt R."/>
            <person name="Wedler H."/>
            <person name="Zollner A."/>
            <person name="Hani J."/>
        </authorList>
    </citation>
    <scope>NUCLEOTIDE SEQUENCE [LARGE SCALE GENOMIC DNA]</scope>
    <source>
        <strain>ATCC 204508 / S288c</strain>
    </source>
</reference>
<reference key="2">
    <citation type="journal article" date="2014" name="G3 (Bethesda)">
        <title>The reference genome sequence of Saccharomyces cerevisiae: Then and now.</title>
        <authorList>
            <person name="Engel S.R."/>
            <person name="Dietrich F.S."/>
            <person name="Fisk D.G."/>
            <person name="Binkley G."/>
            <person name="Balakrishnan R."/>
            <person name="Costanzo M.C."/>
            <person name="Dwight S.S."/>
            <person name="Hitz B.C."/>
            <person name="Karra K."/>
            <person name="Nash R.S."/>
            <person name="Weng S."/>
            <person name="Wong E.D."/>
            <person name="Lloyd P."/>
            <person name="Skrzypek M.S."/>
            <person name="Miyasato S.R."/>
            <person name="Simison M."/>
            <person name="Cherry J.M."/>
        </authorList>
    </citation>
    <scope>GENOME REANNOTATION</scope>
    <source>
        <strain>ATCC 204508 / S288c</strain>
    </source>
</reference>
<accession>P53751</accession>
<accession>D6W1P0</accession>
<evidence type="ECO:0000255" key="1"/>
<evidence type="ECO:0000256" key="2">
    <source>
        <dbReference type="SAM" id="MobiDB-lite"/>
    </source>
</evidence>
<evidence type="ECO:0000305" key="3"/>
<feature type="chain" id="PRO_0000203483" description="Uncharacterized membrane glycoprotein YNR065C">
    <location>
        <begin position="1"/>
        <end position="1116"/>
    </location>
</feature>
<feature type="transmembrane region" description="Helical" evidence="1">
    <location>
        <begin position="934"/>
        <end position="957"/>
    </location>
</feature>
<feature type="repeat" description="BNR 1">
    <location>
        <begin position="21"/>
        <end position="32"/>
    </location>
</feature>
<feature type="repeat" description="BNR 2">
    <location>
        <begin position="67"/>
        <end position="78"/>
    </location>
</feature>
<feature type="repeat" description="BNR 3">
    <location>
        <begin position="307"/>
        <end position="318"/>
    </location>
</feature>
<feature type="repeat" description="BNR 4">
    <location>
        <begin position="404"/>
        <end position="415"/>
    </location>
</feature>
<feature type="repeat" description="BNR 5">
    <location>
        <begin position="607"/>
        <end position="618"/>
    </location>
</feature>
<feature type="repeat" description="BNR 6">
    <location>
        <begin position="686"/>
        <end position="697"/>
    </location>
</feature>
<feature type="repeat" description="BNR 7">
    <location>
        <begin position="727"/>
        <end position="738"/>
    </location>
</feature>
<feature type="region of interest" description="Disordered" evidence="2">
    <location>
        <begin position="1069"/>
        <end position="1116"/>
    </location>
</feature>
<feature type="compositionally biased region" description="Basic and acidic residues" evidence="2">
    <location>
        <begin position="1073"/>
        <end position="1083"/>
    </location>
</feature>
<feature type="compositionally biased region" description="Polar residues" evidence="2">
    <location>
        <begin position="1084"/>
        <end position="1093"/>
    </location>
</feature>
<feature type="glycosylation site" description="N-linked (GlcNAc...) asparagine" evidence="1">
    <location>
        <position position="35"/>
    </location>
</feature>
<feature type="glycosylation site" description="N-linked (GlcNAc...) asparagine" evidence="1">
    <location>
        <position position="336"/>
    </location>
</feature>
<feature type="glycosylation site" description="N-linked (GlcNAc...) asparagine" evidence="1">
    <location>
        <position position="553"/>
    </location>
</feature>
<feature type="glycosylation site" description="N-linked (GlcNAc...) asparagine" evidence="1">
    <location>
        <position position="846"/>
    </location>
</feature>
<feature type="glycosylation site" description="N-linked (GlcNAc...) asparagine" evidence="1">
    <location>
        <position position="985"/>
    </location>
</feature>
<comment type="subcellular location">
    <subcellularLocation>
        <location evidence="3">Membrane</location>
        <topology evidence="3">Single-pass membrane protein</topology>
    </subcellularLocation>
</comment>
<keyword id="KW-0325">Glycoprotein</keyword>
<keyword id="KW-0472">Membrane</keyword>
<keyword id="KW-1185">Reference proteome</keyword>
<keyword id="KW-0677">Repeat</keyword>
<keyword id="KW-0812">Transmembrane</keyword>
<keyword id="KW-1133">Transmembrane helix</keyword>
<protein>
    <recommendedName>
        <fullName>Uncharacterized membrane glycoprotein YNR065C</fullName>
    </recommendedName>
</protein>
<name>YN94_YEAST</name>
<organism>
    <name type="scientific">Saccharomyces cerevisiae (strain ATCC 204508 / S288c)</name>
    <name type="common">Baker's yeast</name>
    <dbReference type="NCBI Taxonomy" id="559292"/>
    <lineage>
        <taxon>Eukaryota</taxon>
        <taxon>Fungi</taxon>
        <taxon>Dikarya</taxon>
        <taxon>Ascomycota</taxon>
        <taxon>Saccharomycotina</taxon>
        <taxon>Saccharomycetes</taxon>
        <taxon>Saccharomycetales</taxon>
        <taxon>Saccharomycetaceae</taxon>
        <taxon>Saccharomyces</taxon>
    </lineage>
</organism>
<sequence>MLMTGSVGDGSEFDWEDQKTFISRDGGLTWRFVHNSSGLYATGDLGNIIVYIPYDPEEDGDFQSEFYYSLDQGRTWNEYELTNAISSVHPYKLINPTPDGSGSKFIFKGTFATTDSETNSITSLKGVEYIIDFSAAFDSRTCEEEDFEDWDLADGKCVNGAKYKYRRRKQDAQCLVKKAFKDLSLDETPCNSCGESDYECSFEFVRDANGLCIPDYNLIAFSNICDKSKDKSVLVEPLQLIKGDECKTPMKIEPVDIPCDEIPEEGSSDREIVTTENKFDFEIKFYQYFDTVADESLVMLNSIGDAYISHDGGQTIKRFDTNGEKIVEVVFNPYFNSSAYLFGSKGNIFSTHDRGHSFMIAKLPEARQLGMPLDFSAKAQDTFIYYGGKNCESILSPECHAVAYLTKDGGETFTEMLDNAIHCEFAGTLFEYPSNEEMVMCQVKKKSSETRSLVSSIDFFQGDNKIIFENIIGYLSTGGYIIVAVPHEDNELRAYVTIDGTEFAEAKFPYGQDVSKQEAFTILGSEKGSIFLHLATNLESGHDFGNLLKSNSNGTSFVTLEHAVNRNTFGYVDFEKVQGLEGIIITNIVSNREKVGENKEDEQLKTKITFNDGSDWNFLKPPKKDSEGKKFPCDSVSLDKCSLHLHGYTERKDIRDTYSSGSALGMMFGVGNVGDKLLPYEECSTFLTTDGGETWTEVKKGPHQWEYGDHGGVLVLVPENAETDSISYSTDFGKTWKDYKFCGDKVLVKDIITVPRDSALRFLLFGEAKNMGSGSFRTYTIDFRNIFERQCEFDITGKKRADFKYSPLGSRTGCLFGHQTEFLRKTDEKCFIGNIPLSEFSRNVKNCSCTRQDFECDYNFYKASDGTCKLVKGLSSANGADICKKEPDLIEYYDSSGYRKIPLSTCKGGLKLDAHLAPHPCPGKEKAFREKYSINTGAYALVFVTILLVIFFAAWFVYDRGIRRNGGFSRFEEIRLGDDGLIENNRTDRVVNIIVRLGLCISLITKSAFQRTKAGVARFSSKLRARFGNRKGPTYSSLLQGQFSDESDGLHEDANDLSSFTSQDSNFEIEQEDAYRPEQEHTSQIDQPATSNIPDALPARSAIHKPDSTAVRNEDE</sequence>
<gene>
    <name type="ordered locus">YNR065C</name>
    <name type="ORF">N3539</name>
</gene>